<name>ILVC_ECOLC</name>
<dbReference type="EC" id="1.1.1.86" evidence="1"/>
<dbReference type="EMBL" id="CP000946">
    <property type="protein sequence ID" value="ACA79824.1"/>
    <property type="molecule type" value="Genomic_DNA"/>
</dbReference>
<dbReference type="RefSeq" id="WP_000024939.1">
    <property type="nucleotide sequence ID" value="NZ_MTFT01000015.1"/>
</dbReference>
<dbReference type="SMR" id="B1IWC4"/>
<dbReference type="KEGG" id="ecl:EcolC_4228"/>
<dbReference type="HOGENOM" id="CLU_551905_0_0_6"/>
<dbReference type="UniPathway" id="UPA00047">
    <property type="reaction ID" value="UER00056"/>
</dbReference>
<dbReference type="UniPathway" id="UPA00049">
    <property type="reaction ID" value="UER00060"/>
</dbReference>
<dbReference type="GO" id="GO:0005829">
    <property type="term" value="C:cytosol"/>
    <property type="evidence" value="ECO:0007669"/>
    <property type="project" value="TreeGrafter"/>
</dbReference>
<dbReference type="GO" id="GO:0004455">
    <property type="term" value="F:ketol-acid reductoisomerase activity"/>
    <property type="evidence" value="ECO:0007669"/>
    <property type="project" value="UniProtKB-UniRule"/>
</dbReference>
<dbReference type="GO" id="GO:0000287">
    <property type="term" value="F:magnesium ion binding"/>
    <property type="evidence" value="ECO:0007669"/>
    <property type="project" value="UniProtKB-UniRule"/>
</dbReference>
<dbReference type="GO" id="GO:0009097">
    <property type="term" value="P:isoleucine biosynthetic process"/>
    <property type="evidence" value="ECO:0007669"/>
    <property type="project" value="UniProtKB-UniRule"/>
</dbReference>
<dbReference type="GO" id="GO:0009099">
    <property type="term" value="P:L-valine biosynthetic process"/>
    <property type="evidence" value="ECO:0007669"/>
    <property type="project" value="UniProtKB-UniRule"/>
</dbReference>
<dbReference type="FunFam" id="1.10.1040.10:FF:000007">
    <property type="entry name" value="Ketol-acid reductoisomerase (NADP(+))"/>
    <property type="match status" value="1"/>
</dbReference>
<dbReference type="FunFam" id="3.40.50.720:FF:000043">
    <property type="entry name" value="Ketol-acid reductoisomerase (NADP(+))"/>
    <property type="match status" value="1"/>
</dbReference>
<dbReference type="Gene3D" id="1.10.1040.10">
    <property type="entry name" value="N-(1-d-carboxylethyl)-l-norvaline Dehydrogenase, domain 2"/>
    <property type="match status" value="1"/>
</dbReference>
<dbReference type="Gene3D" id="3.40.50.720">
    <property type="entry name" value="NAD(P)-binding Rossmann-like Domain"/>
    <property type="match status" value="1"/>
</dbReference>
<dbReference type="HAMAP" id="MF_00435">
    <property type="entry name" value="IlvC"/>
    <property type="match status" value="1"/>
</dbReference>
<dbReference type="InterPro" id="IPR008927">
    <property type="entry name" value="6-PGluconate_DH-like_C_sf"/>
</dbReference>
<dbReference type="InterPro" id="IPR013328">
    <property type="entry name" value="6PGD_dom2"/>
</dbReference>
<dbReference type="InterPro" id="IPR013023">
    <property type="entry name" value="KARI"/>
</dbReference>
<dbReference type="InterPro" id="IPR000506">
    <property type="entry name" value="KARI_C"/>
</dbReference>
<dbReference type="InterPro" id="IPR013116">
    <property type="entry name" value="KARI_N"/>
</dbReference>
<dbReference type="InterPro" id="IPR036291">
    <property type="entry name" value="NAD(P)-bd_dom_sf"/>
</dbReference>
<dbReference type="NCBIfam" id="TIGR00465">
    <property type="entry name" value="ilvC"/>
    <property type="match status" value="1"/>
</dbReference>
<dbReference type="NCBIfam" id="NF003557">
    <property type="entry name" value="PRK05225.1"/>
    <property type="match status" value="1"/>
</dbReference>
<dbReference type="PANTHER" id="PTHR21371">
    <property type="entry name" value="KETOL-ACID REDUCTOISOMERASE, MITOCHONDRIAL"/>
    <property type="match status" value="1"/>
</dbReference>
<dbReference type="PANTHER" id="PTHR21371:SF1">
    <property type="entry name" value="KETOL-ACID REDUCTOISOMERASE, MITOCHONDRIAL"/>
    <property type="match status" value="1"/>
</dbReference>
<dbReference type="Pfam" id="PF01450">
    <property type="entry name" value="KARI_C"/>
    <property type="match status" value="2"/>
</dbReference>
<dbReference type="Pfam" id="PF07991">
    <property type="entry name" value="KARI_N"/>
    <property type="match status" value="1"/>
</dbReference>
<dbReference type="SUPFAM" id="SSF48179">
    <property type="entry name" value="6-phosphogluconate dehydrogenase C-terminal domain-like"/>
    <property type="match status" value="2"/>
</dbReference>
<dbReference type="SUPFAM" id="SSF51735">
    <property type="entry name" value="NAD(P)-binding Rossmann-fold domains"/>
    <property type="match status" value="1"/>
</dbReference>
<dbReference type="PROSITE" id="PS51851">
    <property type="entry name" value="KARI_C"/>
    <property type="match status" value="2"/>
</dbReference>
<dbReference type="PROSITE" id="PS51850">
    <property type="entry name" value="KARI_N"/>
    <property type="match status" value="1"/>
</dbReference>
<evidence type="ECO:0000255" key="1">
    <source>
        <dbReference type="HAMAP-Rule" id="MF_00435"/>
    </source>
</evidence>
<evidence type="ECO:0000255" key="2">
    <source>
        <dbReference type="PROSITE-ProRule" id="PRU01197"/>
    </source>
</evidence>
<evidence type="ECO:0000255" key="3">
    <source>
        <dbReference type="PROSITE-ProRule" id="PRU01198"/>
    </source>
</evidence>
<protein>
    <recommendedName>
        <fullName evidence="1">Ketol-acid reductoisomerase (NADP(+))</fullName>
        <shortName evidence="1">KARI</shortName>
        <ecNumber evidence="1">1.1.1.86</ecNumber>
    </recommendedName>
    <alternativeName>
        <fullName evidence="1">Acetohydroxy-acid isomeroreductase</fullName>
        <shortName evidence="1">AHIR</shortName>
    </alternativeName>
    <alternativeName>
        <fullName evidence="1">Alpha-keto-beta-hydroxylacyl reductoisomerase</fullName>
    </alternativeName>
    <alternativeName>
        <fullName evidence="1">Ketol-acid reductoisomerase type 2</fullName>
    </alternativeName>
    <alternativeName>
        <fullName evidence="1">Ketol-acid reductoisomerase type II</fullName>
    </alternativeName>
</protein>
<comment type="function">
    <text evidence="1">Involved in the biosynthesis of branched-chain amino acids (BCAA). Catalyzes an alkyl-migration followed by a ketol-acid reduction of (S)-2-acetolactate (S2AL) to yield (R)-2,3-dihydroxy-isovalerate. In the isomerase reaction, S2AL is rearranged via a Mg-dependent methyl migration to produce 3-hydroxy-3-methyl-2-ketobutyrate (HMKB). In the reductase reaction, this 2-ketoacid undergoes a metal-dependent reduction by NADPH to yield (R)-2,3-dihydroxy-isovalerate.</text>
</comment>
<comment type="catalytic activity">
    <reaction evidence="1">
        <text>(2R)-2,3-dihydroxy-3-methylbutanoate + NADP(+) = (2S)-2-acetolactate + NADPH + H(+)</text>
        <dbReference type="Rhea" id="RHEA:22068"/>
        <dbReference type="ChEBI" id="CHEBI:15378"/>
        <dbReference type="ChEBI" id="CHEBI:49072"/>
        <dbReference type="ChEBI" id="CHEBI:57783"/>
        <dbReference type="ChEBI" id="CHEBI:58349"/>
        <dbReference type="ChEBI" id="CHEBI:58476"/>
        <dbReference type="EC" id="1.1.1.86"/>
    </reaction>
</comment>
<comment type="catalytic activity">
    <reaction evidence="1">
        <text>(2R,3R)-2,3-dihydroxy-3-methylpentanoate + NADP(+) = (S)-2-ethyl-2-hydroxy-3-oxobutanoate + NADPH + H(+)</text>
        <dbReference type="Rhea" id="RHEA:13493"/>
        <dbReference type="ChEBI" id="CHEBI:15378"/>
        <dbReference type="ChEBI" id="CHEBI:49256"/>
        <dbReference type="ChEBI" id="CHEBI:49258"/>
        <dbReference type="ChEBI" id="CHEBI:57783"/>
        <dbReference type="ChEBI" id="CHEBI:58349"/>
        <dbReference type="EC" id="1.1.1.86"/>
    </reaction>
</comment>
<comment type="cofactor">
    <cofactor evidence="1">
        <name>Mg(2+)</name>
        <dbReference type="ChEBI" id="CHEBI:18420"/>
    </cofactor>
    <text evidence="1">Binds 2 magnesium ions per subunit.</text>
</comment>
<comment type="pathway">
    <text evidence="1">Amino-acid biosynthesis; L-isoleucine biosynthesis; L-isoleucine from 2-oxobutanoate: step 2/4.</text>
</comment>
<comment type="pathway">
    <text evidence="1">Amino-acid biosynthesis; L-valine biosynthesis; L-valine from pyruvate: step 2/4.</text>
</comment>
<comment type="similarity">
    <text evidence="1">Belongs to the ketol-acid reductoisomerase family.</text>
</comment>
<organism>
    <name type="scientific">Escherichia coli (strain ATCC 8739 / DSM 1576 / NBRC 3972 / NCIMB 8545 / WDCM 00012 / Crooks)</name>
    <dbReference type="NCBI Taxonomy" id="481805"/>
    <lineage>
        <taxon>Bacteria</taxon>
        <taxon>Pseudomonadati</taxon>
        <taxon>Pseudomonadota</taxon>
        <taxon>Gammaproteobacteria</taxon>
        <taxon>Enterobacterales</taxon>
        <taxon>Enterobacteriaceae</taxon>
        <taxon>Escherichia</taxon>
    </lineage>
</organism>
<feature type="chain" id="PRO_1000080628" description="Ketol-acid reductoisomerase (NADP(+))">
    <location>
        <begin position="1"/>
        <end position="491"/>
    </location>
</feature>
<feature type="domain" description="KARI N-terminal Rossmann" evidence="2">
    <location>
        <begin position="15"/>
        <end position="208"/>
    </location>
</feature>
<feature type="domain" description="KARI C-terminal knotted 1" evidence="3">
    <location>
        <begin position="209"/>
        <end position="344"/>
    </location>
</feature>
<feature type="domain" description="KARI C-terminal knotted 2" evidence="3">
    <location>
        <begin position="345"/>
        <end position="484"/>
    </location>
</feature>
<feature type="active site" evidence="1">
    <location>
        <position position="132"/>
    </location>
</feature>
<feature type="binding site" evidence="1">
    <location>
        <begin position="45"/>
        <end position="48"/>
    </location>
    <ligand>
        <name>NADP(+)</name>
        <dbReference type="ChEBI" id="CHEBI:58349"/>
    </ligand>
</feature>
<feature type="binding site" evidence="1">
    <location>
        <position position="68"/>
    </location>
    <ligand>
        <name>NADP(+)</name>
        <dbReference type="ChEBI" id="CHEBI:58349"/>
    </ligand>
</feature>
<feature type="binding site" evidence="1">
    <location>
        <position position="76"/>
    </location>
    <ligand>
        <name>NADP(+)</name>
        <dbReference type="ChEBI" id="CHEBI:58349"/>
    </ligand>
</feature>
<feature type="binding site" evidence="1">
    <location>
        <position position="78"/>
    </location>
    <ligand>
        <name>NADP(+)</name>
        <dbReference type="ChEBI" id="CHEBI:58349"/>
    </ligand>
</feature>
<feature type="binding site" evidence="1">
    <location>
        <begin position="108"/>
        <end position="110"/>
    </location>
    <ligand>
        <name>NADP(+)</name>
        <dbReference type="ChEBI" id="CHEBI:58349"/>
    </ligand>
</feature>
<feature type="binding site" evidence="1">
    <location>
        <position position="158"/>
    </location>
    <ligand>
        <name>NADP(+)</name>
        <dbReference type="ChEBI" id="CHEBI:58349"/>
    </ligand>
</feature>
<feature type="binding site" evidence="1">
    <location>
        <position position="217"/>
    </location>
    <ligand>
        <name>Mg(2+)</name>
        <dbReference type="ChEBI" id="CHEBI:18420"/>
        <label>1</label>
    </ligand>
</feature>
<feature type="binding site" evidence="1">
    <location>
        <position position="217"/>
    </location>
    <ligand>
        <name>Mg(2+)</name>
        <dbReference type="ChEBI" id="CHEBI:18420"/>
        <label>2</label>
    </ligand>
</feature>
<feature type="binding site" evidence="1">
    <location>
        <position position="221"/>
    </location>
    <ligand>
        <name>Mg(2+)</name>
        <dbReference type="ChEBI" id="CHEBI:18420"/>
        <label>1</label>
    </ligand>
</feature>
<feature type="binding site" evidence="1">
    <location>
        <position position="389"/>
    </location>
    <ligand>
        <name>Mg(2+)</name>
        <dbReference type="ChEBI" id="CHEBI:18420"/>
        <label>2</label>
    </ligand>
</feature>
<feature type="binding site" evidence="1">
    <location>
        <position position="393"/>
    </location>
    <ligand>
        <name>Mg(2+)</name>
        <dbReference type="ChEBI" id="CHEBI:18420"/>
        <label>2</label>
    </ligand>
</feature>
<feature type="binding site" evidence="1">
    <location>
        <position position="414"/>
    </location>
    <ligand>
        <name>substrate</name>
    </ligand>
</feature>
<accession>B1IWC4</accession>
<keyword id="KW-0028">Amino-acid biosynthesis</keyword>
<keyword id="KW-0100">Branched-chain amino acid biosynthesis</keyword>
<keyword id="KW-0460">Magnesium</keyword>
<keyword id="KW-0479">Metal-binding</keyword>
<keyword id="KW-0521">NADP</keyword>
<keyword id="KW-0560">Oxidoreductase</keyword>
<keyword id="KW-0677">Repeat</keyword>
<sequence length="491" mass="54069">MANYFNTLNLRQQLAQLGKCRFMGRDEFADGASYLQGKKVVIVGCGAQGLNQGLNMRDSGLDISYALRKEAIAEKRASWRKATENGFKVGTYEELIPQADLVINLTPDKQHSDVVRTVQPLMKDGAALGYSHGFNIVEVGEQIRKDITVVMVAPKCPGTEVREEYKRGFGVPTLIAVHPENDPKGEGMAIAKAWAAATGGHRAGVLESSFVAEVKSDLMGEQTILCGMLQAGSLLCFDKLVEEGTDPAYAEKLIQFGWETITEALKQGGITLMMDRLSNPAKLRAYALSEQLKEIMAPLFQKHMDDIISGEFSSGMMADWANDDKKLLTWREETGKTAFETAPQYEGKIGEQEYFDKGVLMIAMVKAGVELAFETMVDSGIIEESAYYESLHELPLIANTIARKRLYEMNVVISDTAEYGNYLFSYACVPLLKPFMAELQPGDLGKAIPEGAVDNGQLRDVNEAIRSHAIEQVGKKLRGYMTDMKRIAVAG</sequence>
<reference key="1">
    <citation type="submission" date="2008-02" db="EMBL/GenBank/DDBJ databases">
        <title>Complete sequence of Escherichia coli C str. ATCC 8739.</title>
        <authorList>
            <person name="Copeland A."/>
            <person name="Lucas S."/>
            <person name="Lapidus A."/>
            <person name="Glavina del Rio T."/>
            <person name="Dalin E."/>
            <person name="Tice H."/>
            <person name="Bruce D."/>
            <person name="Goodwin L."/>
            <person name="Pitluck S."/>
            <person name="Kiss H."/>
            <person name="Brettin T."/>
            <person name="Detter J.C."/>
            <person name="Han C."/>
            <person name="Kuske C.R."/>
            <person name="Schmutz J."/>
            <person name="Larimer F."/>
            <person name="Land M."/>
            <person name="Hauser L."/>
            <person name="Kyrpides N."/>
            <person name="Mikhailova N."/>
            <person name="Ingram L."/>
            <person name="Richardson P."/>
        </authorList>
    </citation>
    <scope>NUCLEOTIDE SEQUENCE [LARGE SCALE GENOMIC DNA]</scope>
    <source>
        <strain>ATCC 8739 / DSM 1576 / NBRC 3972 / NCIMB 8545 / WDCM 00012 / Crooks</strain>
    </source>
</reference>
<proteinExistence type="inferred from homology"/>
<gene>
    <name evidence="1" type="primary">ilvC</name>
    <name type="ordered locus">EcolC_4228</name>
</gene>